<keyword id="KW-0119">Carbohydrate metabolism</keyword>
<keyword id="KW-0903">Direct protein sequencing</keyword>
<keyword id="KW-0325">Glycoprotein</keyword>
<keyword id="KW-0326">Glycosidase</keyword>
<keyword id="KW-0378">Hydrolase</keyword>
<keyword id="KW-0624">Polysaccharide degradation</keyword>
<keyword id="KW-0964">Secreted</keyword>
<keyword id="KW-0732">Signal</keyword>
<keyword id="KW-0858">Xylan degradation</keyword>
<protein>
    <recommendedName>
        <fullName>Arabinan endo-1,5-alpha-L-arabinosidase A</fullName>
        <ecNumber>3.2.1.99</ecNumber>
    </recommendedName>
    <alternativeName>
        <fullName>Endo-1,5-alpha-L-arabinanase A</fullName>
        <shortName>ABN A</shortName>
    </alternativeName>
</protein>
<sequence length="321" mass="34097">MYSLLTALSVPLLAGLAHGYANPGSCSGSCNVHDPALIVRESDGKYFRFSTGNEISYASASSINGPWTAIGSVVPAGSKIDLSGNTDLWAPDLSYVDGTYYCLYSVSTFGSQDSAIGVASSTTMELNTWTDHGSVGVASSSSKNYNAIDGNLLVDGSSYYLQFGSFWGDIYQVKMASPLKTAGSASYNIAYNATGTHSEEGSYLFKYGSYYYLFFSSGTCCGYDTSRPAQGEEYKIMVCRSTSATGGFVDKNGNACTESGGTIVLASHGTVYGPGGQGVYDDPTYGPVLYYHYVDTTIGYADDQKLFGWNTIDFSSGWPVV</sequence>
<reference key="1">
    <citation type="journal article" date="2001" name="Mol. Genet. Genomics">
        <title>Functional cloning of an endo-arabinanase from Aspergillus aculeatus and its heterologous expression in A. oryzae and tobacco.</title>
        <authorList>
            <person name="Skjoet M."/>
            <person name="Kauppinen S."/>
            <person name="Kofod L.V."/>
            <person name="Fuglsang C.C."/>
            <person name="Pauly M."/>
            <person name="Dalboege H."/>
            <person name="Andersen L.N."/>
        </authorList>
    </citation>
    <scope>NUCLEOTIDE SEQUENCE [MRNA]</scope>
    <scope>PROTEIN SEQUENCE OF 20-38</scope>
    <scope>FUNCTION</scope>
    <scope>BIOPHYSICOCHEMICAL PROPERTIES</scope>
    <source>
        <strain>CBS 101.43</strain>
    </source>
</reference>
<organism>
    <name type="scientific">Aspergillus aculeatus</name>
    <dbReference type="NCBI Taxonomy" id="5053"/>
    <lineage>
        <taxon>Eukaryota</taxon>
        <taxon>Fungi</taxon>
        <taxon>Dikarya</taxon>
        <taxon>Ascomycota</taxon>
        <taxon>Pezizomycotina</taxon>
        <taxon>Eurotiomycetes</taxon>
        <taxon>Eurotiomycetidae</taxon>
        <taxon>Eurotiales</taxon>
        <taxon>Aspergillaceae</taxon>
        <taxon>Aspergillus</taxon>
        <taxon>Aspergillus subgen. Circumdati</taxon>
    </lineage>
</organism>
<feature type="signal peptide" evidence="3">
    <location>
        <begin position="1"/>
        <end position="19"/>
    </location>
</feature>
<feature type="chain" id="PRO_5000058634" description="Arabinan endo-1,5-alpha-L-arabinosidase A">
    <location>
        <begin position="20"/>
        <end position="321"/>
    </location>
</feature>
<feature type="active site" description="Proton acceptor" evidence="2">
    <location>
        <position position="34"/>
    </location>
</feature>
<feature type="active site" description="Proton donor" evidence="2">
    <location>
        <position position="200"/>
    </location>
</feature>
<feature type="site" description="Important for catalytic activity, responsible for pKa modulation of the active site Glu and correct orientation of both the proton donor and substrate" evidence="2">
    <location>
        <position position="149"/>
    </location>
</feature>
<feature type="glycosylation site" description="N-linked (GlcNAc...) asparagine" evidence="3">
    <location>
        <position position="192"/>
    </location>
</feature>
<dbReference type="EC" id="3.2.1.99"/>
<dbReference type="EMBL" id="AF300878">
    <property type="protein sequence ID" value="AAG27441.1"/>
    <property type="molecule type" value="mRNA"/>
</dbReference>
<dbReference type="SMR" id="Q9HFS9"/>
<dbReference type="CAZy" id="GH43">
    <property type="family name" value="Glycoside Hydrolase Family 43"/>
</dbReference>
<dbReference type="GlyCosmos" id="Q9HFS9">
    <property type="glycosylation" value="1 site, No reported glycans"/>
</dbReference>
<dbReference type="VEuPathDB" id="FungiDB:ASPACDRAFT_53126"/>
<dbReference type="UniPathway" id="UPA00667"/>
<dbReference type="GO" id="GO:0005576">
    <property type="term" value="C:extracellular region"/>
    <property type="evidence" value="ECO:0007669"/>
    <property type="project" value="UniProtKB-SubCell"/>
</dbReference>
<dbReference type="GO" id="GO:0046558">
    <property type="term" value="F:arabinan endo-1,5-alpha-L-arabinosidase activity"/>
    <property type="evidence" value="ECO:0007669"/>
    <property type="project" value="UniProtKB-EC"/>
</dbReference>
<dbReference type="GO" id="GO:0031222">
    <property type="term" value="P:arabinan catabolic process"/>
    <property type="evidence" value="ECO:0007669"/>
    <property type="project" value="UniProtKB-UniPathway"/>
</dbReference>
<dbReference type="GO" id="GO:0045493">
    <property type="term" value="P:xylan catabolic process"/>
    <property type="evidence" value="ECO:0007669"/>
    <property type="project" value="UniProtKB-KW"/>
</dbReference>
<dbReference type="CDD" id="cd18831">
    <property type="entry name" value="GH43_AnAbnA-like"/>
    <property type="match status" value="1"/>
</dbReference>
<dbReference type="FunFam" id="2.115.10.20:FF:000005">
    <property type="entry name" value="Arabinan endo-1,5-alpha-L-arabinosidase"/>
    <property type="match status" value="1"/>
</dbReference>
<dbReference type="Gene3D" id="2.115.10.20">
    <property type="entry name" value="Glycosyl hydrolase domain, family 43"/>
    <property type="match status" value="1"/>
</dbReference>
<dbReference type="InterPro" id="IPR050727">
    <property type="entry name" value="GH43_arabinanases"/>
</dbReference>
<dbReference type="InterPro" id="IPR006710">
    <property type="entry name" value="Glyco_hydro_43"/>
</dbReference>
<dbReference type="InterPro" id="IPR016840">
    <property type="entry name" value="Glyco_hydro_43_endo_a_Ara-ase"/>
</dbReference>
<dbReference type="InterPro" id="IPR023296">
    <property type="entry name" value="Glyco_hydro_beta-prop_sf"/>
</dbReference>
<dbReference type="PANTHER" id="PTHR43301">
    <property type="entry name" value="ARABINAN ENDO-1,5-ALPHA-L-ARABINOSIDASE"/>
    <property type="match status" value="1"/>
</dbReference>
<dbReference type="PANTHER" id="PTHR43301:SF3">
    <property type="entry name" value="ARABINAN ENDO-1,5-ALPHA-L-ARABINOSIDASE A-RELATED"/>
    <property type="match status" value="1"/>
</dbReference>
<dbReference type="Pfam" id="PF04616">
    <property type="entry name" value="Glyco_hydro_43"/>
    <property type="match status" value="1"/>
</dbReference>
<dbReference type="PIRSF" id="PIRSF026534">
    <property type="entry name" value="Endo_alpha-L-arabinosidase"/>
    <property type="match status" value="1"/>
</dbReference>
<dbReference type="SUPFAM" id="SSF75005">
    <property type="entry name" value="Arabinanase/levansucrase/invertase"/>
    <property type="match status" value="1"/>
</dbReference>
<gene>
    <name type="primary">abnA</name>
    <name type="synonym">ara1</name>
</gene>
<comment type="function">
    <text evidence="1 4">Endo-1,5-alpha-L-arabinanase involved in degradation of pectin. Its preferred substrate is linear 1,5-alpha-L-arabinan (By similarity).</text>
</comment>
<comment type="catalytic activity">
    <reaction>
        <text>Endohydrolysis of (1-&gt;5)-alpha-arabinofuranosidic linkages in (1-&gt;5)-arabinans.</text>
        <dbReference type="EC" id="3.2.1.99"/>
    </reaction>
</comment>
<comment type="biophysicochemical properties">
    <kinetics>
        <KM evidence="4">66 mM for AZCL-debranched arabinan</KM>
    </kinetics>
    <phDependence>
        <text evidence="4">Optimum pH is 5.5. Stable between pH 5.5 and 6.5.</text>
    </phDependence>
    <temperatureDependence>
        <text evidence="4">Optimum temperature is 50 degrees Celsius.</text>
    </temperatureDependence>
</comment>
<comment type="pathway">
    <text>Glycan metabolism; L-arabinan degradation.</text>
</comment>
<comment type="subcellular location">
    <subcellularLocation>
        <location evidence="1">Secreted</location>
    </subcellularLocation>
</comment>
<comment type="similarity">
    <text evidence="5">Belongs to the glycosyl hydrolase 43 family.</text>
</comment>
<evidence type="ECO:0000250" key="1"/>
<evidence type="ECO:0000250" key="2">
    <source>
        <dbReference type="UniProtKB" id="P94522"/>
    </source>
</evidence>
<evidence type="ECO:0000255" key="3"/>
<evidence type="ECO:0000269" key="4">
    <source>
    </source>
</evidence>
<evidence type="ECO:0000305" key="5"/>
<name>ABNA_ASPAC</name>
<proteinExistence type="evidence at protein level"/>
<accession>Q9HFS9</accession>